<protein>
    <recommendedName>
        <fullName evidence="1">RNA polymerase-associated protein RapA</fullName>
        <ecNumber evidence="1">3.6.4.-</ecNumber>
    </recommendedName>
    <alternativeName>
        <fullName evidence="1">ATP-dependent helicase HepA</fullName>
    </alternativeName>
</protein>
<evidence type="ECO:0000255" key="1">
    <source>
        <dbReference type="HAMAP-Rule" id="MF_01821"/>
    </source>
</evidence>
<keyword id="KW-0010">Activator</keyword>
<keyword id="KW-0067">ATP-binding</keyword>
<keyword id="KW-0238">DNA-binding</keyword>
<keyword id="KW-0347">Helicase</keyword>
<keyword id="KW-0378">Hydrolase</keyword>
<keyword id="KW-0547">Nucleotide-binding</keyword>
<keyword id="KW-0804">Transcription</keyword>
<keyword id="KW-0805">Transcription regulation</keyword>
<organism>
    <name type="scientific">Shigella flexneri serotype 5b (strain 8401)</name>
    <dbReference type="NCBI Taxonomy" id="373384"/>
    <lineage>
        <taxon>Bacteria</taxon>
        <taxon>Pseudomonadati</taxon>
        <taxon>Pseudomonadota</taxon>
        <taxon>Gammaproteobacteria</taxon>
        <taxon>Enterobacterales</taxon>
        <taxon>Enterobacteriaceae</taxon>
        <taxon>Shigella</taxon>
    </lineage>
</organism>
<comment type="function">
    <text evidence="1">Transcription regulator that activates transcription by stimulating RNA polymerase (RNAP) recycling in case of stress conditions such as supercoiled DNA or high salt concentrations. Probably acts by releasing the RNAP, when it is trapped or immobilized on tightly supercoiled DNA. Does not activate transcription on linear DNA. Probably not involved in DNA repair.</text>
</comment>
<comment type="subunit">
    <text evidence="1">Interacts with the RNAP. Has a higher affinity for the core RNAP than for the holoenzyme. Its ATPase activity is stimulated by binding to RNAP.</text>
</comment>
<comment type="similarity">
    <text evidence="1">Belongs to the SNF2/RAD54 helicase family. RapA subfamily.</text>
</comment>
<proteinExistence type="inferred from homology"/>
<sequence length="968" mass="109742">MPFTLGQRWISDTESELGLGTVVAVDARTVTLLFPSTGENRLYARSDSPVTRVMFNPGDTITSHDGWQMQVEEVKEENGLLTYIGTRLDTEESGVALREVFLDSKLVFSKPQDRLFAGQIDRMDRFALRYRARKYSSEQFRMPYSGLRGQRTSLIPHQLNIAHDVGRRHAPRVLLADEVGLGKTIEAGMILHQQLLSGAAERVLIIVPETLQHQWLVEMLRRFNLRFALFDDERYAEAQHDAYNPFDTEQLVICSLDFARRSKQRLEHLCEAEWDLLVVDEAHHLVWSEDAPSREYQAIEQLAEHVPGVLLLTATPEQLGMESHFARLRLLDPNRFHDFAQFVEEQKNYRPVADAVAMLLAGNKLSNDELNMLGEMIGEQDIEPLLQAANSDSEDAQSARQELVSMLMDRHGTSRVLFRNTRNGVKGFPKRELHTIKLPLPTQYQTAIKVSGIMGARKSAEDRARDMLYPERIYQEFEGDNATWWNFDPRVEWLMGYLTSHRSQKVLVICAKAATALQLEQVLREREGIRAAVFHEGMSIIERDRAAAWFAEEDTGAQVLLCSEIGSEGRNFQFASHMVMFDLPFNPDLLEQRIGRLDRIGQAHDIQIHVPYLEKTAQSVLVRWYHEGLDAFEHTCPTGRTIYDSVYNDLINYLASPDQTEGFDDLIKSCREQHEALKAQLEQGRDRLLEIHSNGGEKAQALAESIEEQDDDTNLIAFAMNLFDIIGINQDDRGDNMIVLTPSDHMLVPDFPGLSEDGITITFDREVALAREDAQFITWEHPLIRNGLDLILSGDTGSSTISLLKNKALPVGTLLVELIYVVEAQAPKQLQLNRFLPPTPVRMLLDKNGNNLAAQVEFETFNRQLNAVNRHTGSKLVNAVQQDVHAILQLGEAQIEKSARALIDAARNEADEKLSAELSRLEALRAVNPNIRDDELTAIESNRQQVMESLDQAGWRLDALRLIVVTHQ</sequence>
<feature type="chain" id="PRO_1000088394" description="RNA polymerase-associated protein RapA">
    <location>
        <begin position="1"/>
        <end position="968"/>
    </location>
</feature>
<feature type="domain" description="Helicase ATP-binding" evidence="1">
    <location>
        <begin position="164"/>
        <end position="334"/>
    </location>
</feature>
<feature type="domain" description="Helicase C-terminal" evidence="1">
    <location>
        <begin position="490"/>
        <end position="662"/>
    </location>
</feature>
<feature type="short sequence motif" description="DEAH box">
    <location>
        <begin position="280"/>
        <end position="283"/>
    </location>
</feature>
<feature type="binding site" evidence="1">
    <location>
        <begin position="177"/>
        <end position="184"/>
    </location>
    <ligand>
        <name>ATP</name>
        <dbReference type="ChEBI" id="CHEBI:30616"/>
    </ligand>
</feature>
<dbReference type="EC" id="3.6.4.-" evidence="1"/>
<dbReference type="EMBL" id="CP000266">
    <property type="protein sequence ID" value="ABF02338.1"/>
    <property type="molecule type" value="Genomic_DNA"/>
</dbReference>
<dbReference type="RefSeq" id="WP_001117023.1">
    <property type="nucleotide sequence ID" value="NC_008258.1"/>
</dbReference>
<dbReference type="SMR" id="Q0T8D8"/>
<dbReference type="KEGG" id="sfv:SFV_0051"/>
<dbReference type="HOGENOM" id="CLU_011520_0_0_6"/>
<dbReference type="Proteomes" id="UP000000659">
    <property type="component" value="Chromosome"/>
</dbReference>
<dbReference type="GO" id="GO:0005524">
    <property type="term" value="F:ATP binding"/>
    <property type="evidence" value="ECO:0007669"/>
    <property type="project" value="UniProtKB-UniRule"/>
</dbReference>
<dbReference type="GO" id="GO:0003677">
    <property type="term" value="F:DNA binding"/>
    <property type="evidence" value="ECO:0007669"/>
    <property type="project" value="UniProtKB-KW"/>
</dbReference>
<dbReference type="GO" id="GO:0004386">
    <property type="term" value="F:helicase activity"/>
    <property type="evidence" value="ECO:0007669"/>
    <property type="project" value="UniProtKB-UniRule"/>
</dbReference>
<dbReference type="GO" id="GO:0016817">
    <property type="term" value="F:hydrolase activity, acting on acid anhydrides"/>
    <property type="evidence" value="ECO:0007669"/>
    <property type="project" value="InterPro"/>
</dbReference>
<dbReference type="GO" id="GO:0006355">
    <property type="term" value="P:regulation of DNA-templated transcription"/>
    <property type="evidence" value="ECO:0007669"/>
    <property type="project" value="UniProtKB-UniRule"/>
</dbReference>
<dbReference type="CDD" id="cd18011">
    <property type="entry name" value="DEXDc_RapA"/>
    <property type="match status" value="1"/>
</dbReference>
<dbReference type="CDD" id="cd18793">
    <property type="entry name" value="SF2_C_SNF"/>
    <property type="match status" value="1"/>
</dbReference>
<dbReference type="FunFam" id="2.30.30.140:FF:000020">
    <property type="entry name" value="RNA polymerase-associated protein RapA"/>
    <property type="match status" value="1"/>
</dbReference>
<dbReference type="FunFam" id="2.30.30.930:FF:000001">
    <property type="entry name" value="RNA polymerase-associated protein RapA"/>
    <property type="match status" value="1"/>
</dbReference>
<dbReference type="FunFam" id="3.30.360.80:FF:000001">
    <property type="entry name" value="RNA polymerase-associated protein RapA"/>
    <property type="match status" value="1"/>
</dbReference>
<dbReference type="FunFam" id="3.40.50.10810:FF:000012">
    <property type="entry name" value="RNA polymerase-associated protein RapA"/>
    <property type="match status" value="1"/>
</dbReference>
<dbReference type="FunFam" id="3.40.50.300:FF:000350">
    <property type="entry name" value="RNA polymerase-associated protein RapA"/>
    <property type="match status" value="1"/>
</dbReference>
<dbReference type="Gene3D" id="2.30.30.140">
    <property type="match status" value="1"/>
</dbReference>
<dbReference type="Gene3D" id="2.30.30.930">
    <property type="match status" value="1"/>
</dbReference>
<dbReference type="Gene3D" id="3.30.360.80">
    <property type="match status" value="1"/>
</dbReference>
<dbReference type="Gene3D" id="6.10.140.1500">
    <property type="match status" value="1"/>
</dbReference>
<dbReference type="Gene3D" id="6.10.140.2230">
    <property type="match status" value="1"/>
</dbReference>
<dbReference type="Gene3D" id="3.40.50.300">
    <property type="entry name" value="P-loop containing nucleotide triphosphate hydrolases"/>
    <property type="match status" value="1"/>
</dbReference>
<dbReference type="Gene3D" id="3.40.50.10810">
    <property type="entry name" value="Tandem AAA-ATPase domain"/>
    <property type="match status" value="1"/>
</dbReference>
<dbReference type="HAMAP" id="MF_01821">
    <property type="entry name" value="Helicase_RapA"/>
    <property type="match status" value="1"/>
</dbReference>
<dbReference type="InterPro" id="IPR014001">
    <property type="entry name" value="Helicase_ATP-bd"/>
</dbReference>
<dbReference type="InterPro" id="IPR001650">
    <property type="entry name" value="Helicase_C-like"/>
</dbReference>
<dbReference type="InterPro" id="IPR023949">
    <property type="entry name" value="Helicase_RapA"/>
</dbReference>
<dbReference type="InterPro" id="IPR027417">
    <property type="entry name" value="P-loop_NTPase"/>
</dbReference>
<dbReference type="InterPro" id="IPR022737">
    <property type="entry name" value="RapA_C"/>
</dbReference>
<dbReference type="InterPro" id="IPR038718">
    <property type="entry name" value="SNF2-like_sf"/>
</dbReference>
<dbReference type="InterPro" id="IPR049730">
    <property type="entry name" value="SNF2/RAD54-like_C"/>
</dbReference>
<dbReference type="InterPro" id="IPR000330">
    <property type="entry name" value="SNF2_N"/>
</dbReference>
<dbReference type="InterPro" id="IPR040765">
    <property type="entry name" value="Tudor_1_RapA"/>
</dbReference>
<dbReference type="InterPro" id="IPR040766">
    <property type="entry name" value="Tudor_2_RapA"/>
</dbReference>
<dbReference type="NCBIfam" id="NF003426">
    <property type="entry name" value="PRK04914.1"/>
    <property type="match status" value="1"/>
</dbReference>
<dbReference type="PANTHER" id="PTHR45766">
    <property type="entry name" value="DNA ANNEALING HELICASE AND ENDONUCLEASE ZRANB3 FAMILY MEMBER"/>
    <property type="match status" value="1"/>
</dbReference>
<dbReference type="PANTHER" id="PTHR45766:SF6">
    <property type="entry name" value="SWI_SNF-RELATED MATRIX-ASSOCIATED ACTIN-DEPENDENT REGULATOR OF CHROMATIN SUBFAMILY A-LIKE PROTEIN 1"/>
    <property type="match status" value="1"/>
</dbReference>
<dbReference type="Pfam" id="PF00271">
    <property type="entry name" value="Helicase_C"/>
    <property type="match status" value="1"/>
</dbReference>
<dbReference type="Pfam" id="PF12137">
    <property type="entry name" value="RapA_C"/>
    <property type="match status" value="1"/>
</dbReference>
<dbReference type="Pfam" id="PF00176">
    <property type="entry name" value="SNF2-rel_dom"/>
    <property type="match status" value="1"/>
</dbReference>
<dbReference type="Pfam" id="PF18339">
    <property type="entry name" value="Tudor_1_RapA"/>
    <property type="match status" value="1"/>
</dbReference>
<dbReference type="Pfam" id="PF18337">
    <property type="entry name" value="Tudor_RapA"/>
    <property type="match status" value="1"/>
</dbReference>
<dbReference type="SMART" id="SM00487">
    <property type="entry name" value="DEXDc"/>
    <property type="match status" value="1"/>
</dbReference>
<dbReference type="SMART" id="SM00490">
    <property type="entry name" value="HELICc"/>
    <property type="match status" value="1"/>
</dbReference>
<dbReference type="SUPFAM" id="SSF52540">
    <property type="entry name" value="P-loop containing nucleoside triphosphate hydrolases"/>
    <property type="match status" value="2"/>
</dbReference>
<dbReference type="PROSITE" id="PS51192">
    <property type="entry name" value="HELICASE_ATP_BIND_1"/>
    <property type="match status" value="1"/>
</dbReference>
<dbReference type="PROSITE" id="PS51194">
    <property type="entry name" value="HELICASE_CTER"/>
    <property type="match status" value="1"/>
</dbReference>
<name>RAPA_SHIF8</name>
<accession>Q0T8D8</accession>
<reference key="1">
    <citation type="journal article" date="2006" name="BMC Genomics">
        <title>Complete genome sequence of Shigella flexneri 5b and comparison with Shigella flexneri 2a.</title>
        <authorList>
            <person name="Nie H."/>
            <person name="Yang F."/>
            <person name="Zhang X."/>
            <person name="Yang J."/>
            <person name="Chen L."/>
            <person name="Wang J."/>
            <person name="Xiong Z."/>
            <person name="Peng J."/>
            <person name="Sun L."/>
            <person name="Dong J."/>
            <person name="Xue Y."/>
            <person name="Xu X."/>
            <person name="Chen S."/>
            <person name="Yao Z."/>
            <person name="Shen Y."/>
            <person name="Jin Q."/>
        </authorList>
    </citation>
    <scope>NUCLEOTIDE SEQUENCE [LARGE SCALE GENOMIC DNA]</scope>
    <source>
        <strain>8401</strain>
    </source>
</reference>
<gene>
    <name evidence="1" type="primary">rapA</name>
    <name type="ordered locus">SFV_0051</name>
</gene>